<dbReference type="EMBL" id="CT971583">
    <property type="protein sequence ID" value="CAK24666.1"/>
    <property type="molecule type" value="Genomic_DNA"/>
</dbReference>
<dbReference type="STRING" id="32051.SynWH7803_2240"/>
<dbReference type="KEGG" id="syx:SynWH7803_2240"/>
<dbReference type="eggNOG" id="ENOG5032YB3">
    <property type="taxonomic scope" value="Bacteria"/>
</dbReference>
<dbReference type="HOGENOM" id="CLU_180777_0_0_3"/>
<dbReference type="OrthoDB" id="516864at2"/>
<dbReference type="Proteomes" id="UP000001566">
    <property type="component" value="Chromosome"/>
</dbReference>
<dbReference type="HAMAP" id="MF_01360">
    <property type="entry name" value="UPF0367"/>
    <property type="match status" value="1"/>
</dbReference>
<dbReference type="InterPro" id="IPR020885">
    <property type="entry name" value="UPF0367"/>
</dbReference>
<dbReference type="NCBIfam" id="NF010236">
    <property type="entry name" value="PRK13683.1"/>
    <property type="match status" value="1"/>
</dbReference>
<organism>
    <name type="scientific">Synechococcus sp. (strain WH7803)</name>
    <dbReference type="NCBI Taxonomy" id="32051"/>
    <lineage>
        <taxon>Bacteria</taxon>
        <taxon>Bacillati</taxon>
        <taxon>Cyanobacteriota</taxon>
        <taxon>Cyanophyceae</taxon>
        <taxon>Synechococcales</taxon>
        <taxon>Synechococcaceae</taxon>
        <taxon>Synechococcus</taxon>
    </lineage>
</organism>
<protein>
    <recommendedName>
        <fullName evidence="1">UPF0367 protein SynWH7803_2240</fullName>
    </recommendedName>
</protein>
<accession>A5GP01</accession>
<reference key="1">
    <citation type="submission" date="2006-05" db="EMBL/GenBank/DDBJ databases">
        <authorList>
            <consortium name="Genoscope"/>
        </authorList>
    </citation>
    <scope>NUCLEOTIDE SEQUENCE [LARGE SCALE GENOMIC DNA]</scope>
    <source>
        <strain>WH7803</strain>
    </source>
</reference>
<keyword id="KW-1185">Reference proteome</keyword>
<comment type="similarity">
    <text evidence="1">Belongs to the UPF0367 family.</text>
</comment>
<proteinExistence type="inferred from homology"/>
<gene>
    <name type="ordered locus">SynWH7803_2240</name>
</gene>
<sequence>MYVIELALRMSPMPVSVQRKEHDSAEALYQQVRSALEQGQPRLLELCCEKVEGKRLSVLTSDLLAVQIYEKTAASGGTKRPGFSFEA</sequence>
<feature type="chain" id="PRO_1000067777" description="UPF0367 protein SynWH7803_2240">
    <location>
        <begin position="1"/>
        <end position="87"/>
    </location>
</feature>
<name>Y2240_SYNPW</name>
<evidence type="ECO:0000255" key="1">
    <source>
        <dbReference type="HAMAP-Rule" id="MF_01360"/>
    </source>
</evidence>